<organism>
    <name type="scientific">Escherichia coli O139:H28 (strain E24377A / ETEC)</name>
    <dbReference type="NCBI Taxonomy" id="331111"/>
    <lineage>
        <taxon>Bacteria</taxon>
        <taxon>Pseudomonadati</taxon>
        <taxon>Pseudomonadota</taxon>
        <taxon>Gammaproteobacteria</taxon>
        <taxon>Enterobacterales</taxon>
        <taxon>Enterobacteriaceae</taxon>
        <taxon>Escherichia</taxon>
    </lineage>
</organism>
<keyword id="KW-0002">3D-structure</keyword>
<keyword id="KW-0007">Acetylation</keyword>
<keyword id="KW-0240">DNA-directed RNA polymerase</keyword>
<keyword id="KW-0548">Nucleotidyltransferase</keyword>
<keyword id="KW-1185">Reference proteome</keyword>
<keyword id="KW-0804">Transcription</keyword>
<keyword id="KW-0808">Transferase</keyword>
<evidence type="ECO:0000255" key="1">
    <source>
        <dbReference type="HAMAP-Rule" id="MF_01321"/>
    </source>
</evidence>
<proteinExistence type="evidence at protein level"/>
<sequence length="1342" mass="150632">MVYSYTEKKRIRKDFGKRPQVLDVPYLLSIQLDSFQKFIEQDPEGQYGLEAAFRSVFPIQSYSGNSELQYVSYRLGEPVFDVQECQIRGVTYSAPLRVKLRLVIYEREAPEGTVKDIKEQEVYMGEIPLMTDNGTFVINGTERVIVSQLHRSPGVFFDSDKGKTHSSGKVLYNARIIPYRGSWLDFEFDPKDNLFVRIDRRRKLPATIILRALNYTTEQILDLFFEKVIFEIRDNKLQMELVPERLRGETASFDIEANGKVYVEKGRRITARHIRQLEKDDVKLIEVPVEYIAGKVVAKDYIDESTGELICAANMELSLDLLAKLSQSGHKRIETLFTNDLDHGPYISETLRVDPTNDRLSALVEIYRMMRPGEPPTREAAESLFENLFFSEDRYDLSAVGRMKFNRSLLREEIEGSGILSKDDIIDVMKKLIDIRNGKGEVDDIDHLGNRRIRSVGEMAENQFRVGLVRVERAVKERLSLGDLDTLMPQDMINAKPISAAVKEFFGSSQLSQFMDQNNPLSEITHKRRISALGPGGLTRERAGFEVRDVHPTHYGRVCPIETPEGPNIGLINSLSVYAQTNEYGFLETPYRKVTDGVVTDEIHYLSAIEEGNYVIAQANSNLDEEGHFVEDLVTCRSKGESSLFSRDQVDYMDVSTQQVVSVGASLIPFLEHDDANRALMGANMQRQAVPTLRADKPLVGTGMERAVAVDSGVTAVAKRGGVVQYVDASRIVIKVNEDEMYPGEAGIDIYNLTKYTRSNQNTCINQMPCVSLGEPVERGDVLADGPSTDLGELALGQNMRVAFMPWNGYNFEDSILVSERVVQEDRFTTIHIQELACVSRDTKLGPEEITADIPNVGEAALSKLDESGIVYIGAEVTGGDILVGKVTPKGETQLTPEEKLLRAIFGEKASDVKDSSLRVPNGVSGTVIDVQVFTRDGVEKDKRALEIEEMQLKQAKKDLSEELQILEAGLFSRIRAVLVAGGVEAEKLDKLPRDRWLELGLTDEEKQNQLEQLAEQYDELKHEFEKKLEAKRRKITQGDDLAPGVLKIVKVYLAVKRRIQPGDKMAGRHGNKGVISKINPIEDMPYDENGTPVDIVLNPLGVPSRMNIGQILETHLGMAAKGIGDKINAMLKQQQEVAKLREFIQRAYDLGADVRQKVDLSTFSDEEVMRLAENLRKGMPIATPVFDGAKEAEIKELLKLGDLPTSGQIRLYDGRTGEQFERPVTVGYMYMLKLNHLVDDKMHARSTGSYSLVTQQPLGGKAQFGGQRFGEMEVWALEAYGAAYTLQEMLTVKSDDVNGRTKMYKNIVDGNHQMEPGMPESFNVLLKEIRSLGINIELEDE</sequence>
<reference key="1">
    <citation type="journal article" date="2008" name="J. Bacteriol.">
        <title>The pangenome structure of Escherichia coli: comparative genomic analysis of E. coli commensal and pathogenic isolates.</title>
        <authorList>
            <person name="Rasko D.A."/>
            <person name="Rosovitz M.J."/>
            <person name="Myers G.S.A."/>
            <person name="Mongodin E.F."/>
            <person name="Fricke W.F."/>
            <person name="Gajer P."/>
            <person name="Crabtree J."/>
            <person name="Sebaihia M."/>
            <person name="Thomson N.R."/>
            <person name="Chaudhuri R."/>
            <person name="Henderson I.R."/>
            <person name="Sperandio V."/>
            <person name="Ravel J."/>
        </authorList>
    </citation>
    <scope>NUCLEOTIDE SEQUENCE [LARGE SCALE GENOMIC DNA]</scope>
    <source>
        <strain>E24377A / ETEC</strain>
    </source>
</reference>
<protein>
    <recommendedName>
        <fullName evidence="1">DNA-directed RNA polymerase subunit beta</fullName>
        <shortName evidence="1">RNAP subunit beta</shortName>
        <ecNumber evidence="1">2.7.7.6</ecNumber>
    </recommendedName>
    <alternativeName>
        <fullName evidence="1">RNA polymerase subunit beta</fullName>
    </alternativeName>
    <alternativeName>
        <fullName evidence="1">Transcriptase subunit beta</fullName>
    </alternativeName>
</protein>
<accession>A7ZUK1</accession>
<dbReference type="EC" id="2.7.7.6" evidence="1"/>
<dbReference type="EMBL" id="CP000800">
    <property type="protein sequence ID" value="ABV17690.1"/>
    <property type="molecule type" value="Genomic_DNA"/>
</dbReference>
<dbReference type="RefSeq" id="WP_000263098.1">
    <property type="nucleotide sequence ID" value="NC_009801.1"/>
</dbReference>
<dbReference type="PDB" id="4YFK">
    <property type="method" value="X-ray"/>
    <property type="resolution" value="3.57 A"/>
    <property type="chains" value="C/I=1-1342"/>
</dbReference>
<dbReference type="PDB" id="4YFN">
    <property type="method" value="X-ray"/>
    <property type="resolution" value="3.82 A"/>
    <property type="chains" value="C/I=1-1342"/>
</dbReference>
<dbReference type="PDB" id="4YFX">
    <property type="method" value="X-ray"/>
    <property type="resolution" value="3.84 A"/>
    <property type="chains" value="C/I=1-1342"/>
</dbReference>
<dbReference type="PDBsum" id="4YFK"/>
<dbReference type="PDBsum" id="4YFN"/>
<dbReference type="PDBsum" id="4YFX"/>
<dbReference type="EMDB" id="EMD-29812"/>
<dbReference type="SMR" id="A7ZUK1"/>
<dbReference type="GeneID" id="93777907"/>
<dbReference type="KEGG" id="ecw:EcE24377A_4528"/>
<dbReference type="HOGENOM" id="CLU_000524_4_3_6"/>
<dbReference type="Proteomes" id="UP000001122">
    <property type="component" value="Chromosome"/>
</dbReference>
<dbReference type="GO" id="GO:0000428">
    <property type="term" value="C:DNA-directed RNA polymerase complex"/>
    <property type="evidence" value="ECO:0007669"/>
    <property type="project" value="UniProtKB-KW"/>
</dbReference>
<dbReference type="GO" id="GO:0003677">
    <property type="term" value="F:DNA binding"/>
    <property type="evidence" value="ECO:0007669"/>
    <property type="project" value="UniProtKB-UniRule"/>
</dbReference>
<dbReference type="GO" id="GO:0003899">
    <property type="term" value="F:DNA-directed RNA polymerase activity"/>
    <property type="evidence" value="ECO:0007669"/>
    <property type="project" value="UniProtKB-UniRule"/>
</dbReference>
<dbReference type="GO" id="GO:0032549">
    <property type="term" value="F:ribonucleoside binding"/>
    <property type="evidence" value="ECO:0007669"/>
    <property type="project" value="InterPro"/>
</dbReference>
<dbReference type="GO" id="GO:0006351">
    <property type="term" value="P:DNA-templated transcription"/>
    <property type="evidence" value="ECO:0007669"/>
    <property type="project" value="UniProtKB-UniRule"/>
</dbReference>
<dbReference type="CDD" id="cd00653">
    <property type="entry name" value="RNA_pol_B_RPB2"/>
    <property type="match status" value="1"/>
</dbReference>
<dbReference type="FunFam" id="2.30.150.10:FF:000001">
    <property type="entry name" value="DNA-directed RNA polymerase subunit beta"/>
    <property type="match status" value="1"/>
</dbReference>
<dbReference type="FunFam" id="2.40.270.10:FF:000003">
    <property type="entry name" value="DNA-directed RNA polymerase subunit beta"/>
    <property type="match status" value="1"/>
</dbReference>
<dbReference type="FunFam" id="2.40.270.10:FF:000004">
    <property type="entry name" value="DNA-directed RNA polymerase subunit beta"/>
    <property type="match status" value="1"/>
</dbReference>
<dbReference type="FunFam" id="2.40.50.100:FF:000006">
    <property type="entry name" value="DNA-directed RNA polymerase subunit beta"/>
    <property type="match status" value="1"/>
</dbReference>
<dbReference type="FunFam" id="2.40.50.150:FF:000001">
    <property type="entry name" value="DNA-directed RNA polymerase subunit beta"/>
    <property type="match status" value="1"/>
</dbReference>
<dbReference type="FunFam" id="3.90.1100.10:FF:000002">
    <property type="entry name" value="DNA-directed RNA polymerase subunit beta"/>
    <property type="match status" value="1"/>
</dbReference>
<dbReference type="FunFam" id="3.90.1110.10:FF:000001">
    <property type="entry name" value="DNA-directed RNA polymerase subunit beta"/>
    <property type="match status" value="1"/>
</dbReference>
<dbReference type="FunFam" id="3.90.1110.10:FF:000004">
    <property type="entry name" value="DNA-directed RNA polymerase subunit beta"/>
    <property type="match status" value="1"/>
</dbReference>
<dbReference type="FunFam" id="3.90.1800.10:FF:000001">
    <property type="entry name" value="DNA-directed RNA polymerase subunit beta"/>
    <property type="match status" value="1"/>
</dbReference>
<dbReference type="Gene3D" id="2.40.50.100">
    <property type="match status" value="1"/>
</dbReference>
<dbReference type="Gene3D" id="2.40.50.150">
    <property type="match status" value="1"/>
</dbReference>
<dbReference type="Gene3D" id="3.90.1100.10">
    <property type="match status" value="2"/>
</dbReference>
<dbReference type="Gene3D" id="6.10.140.1670">
    <property type="match status" value="1"/>
</dbReference>
<dbReference type="Gene3D" id="2.30.150.10">
    <property type="entry name" value="DNA-directed RNA polymerase, beta subunit, external 1 domain"/>
    <property type="match status" value="1"/>
</dbReference>
<dbReference type="Gene3D" id="2.40.270.10">
    <property type="entry name" value="DNA-directed RNA polymerase, subunit 2, domain 6"/>
    <property type="match status" value="1"/>
</dbReference>
<dbReference type="Gene3D" id="3.90.1800.10">
    <property type="entry name" value="RNA polymerase alpha subunit dimerisation domain"/>
    <property type="match status" value="1"/>
</dbReference>
<dbReference type="Gene3D" id="3.90.1110.10">
    <property type="entry name" value="RNA polymerase Rpb2, domain 2"/>
    <property type="match status" value="1"/>
</dbReference>
<dbReference type="HAMAP" id="MF_01321">
    <property type="entry name" value="RNApol_bact_RpoB"/>
    <property type="match status" value="1"/>
</dbReference>
<dbReference type="InterPro" id="IPR042107">
    <property type="entry name" value="DNA-dir_RNA_pol_bsu_ext_1_sf"/>
</dbReference>
<dbReference type="InterPro" id="IPR019462">
    <property type="entry name" value="DNA-dir_RNA_pol_bsu_external_1"/>
</dbReference>
<dbReference type="InterPro" id="IPR015712">
    <property type="entry name" value="DNA-dir_RNA_pol_su2"/>
</dbReference>
<dbReference type="InterPro" id="IPR007120">
    <property type="entry name" value="DNA-dir_RNAP_su2_dom"/>
</dbReference>
<dbReference type="InterPro" id="IPR037033">
    <property type="entry name" value="DNA-dir_RNAP_su2_hyb_sf"/>
</dbReference>
<dbReference type="InterPro" id="IPR010243">
    <property type="entry name" value="RNA_pol_bsu_bac"/>
</dbReference>
<dbReference type="InterPro" id="IPR007121">
    <property type="entry name" value="RNA_pol_bsu_CS"/>
</dbReference>
<dbReference type="InterPro" id="IPR007644">
    <property type="entry name" value="RNA_pol_bsu_protrusion"/>
</dbReference>
<dbReference type="InterPro" id="IPR007642">
    <property type="entry name" value="RNA_pol_Rpb2_2"/>
</dbReference>
<dbReference type="InterPro" id="IPR037034">
    <property type="entry name" value="RNA_pol_Rpb2_2_sf"/>
</dbReference>
<dbReference type="InterPro" id="IPR007645">
    <property type="entry name" value="RNA_pol_Rpb2_3"/>
</dbReference>
<dbReference type="InterPro" id="IPR007641">
    <property type="entry name" value="RNA_pol_Rpb2_7"/>
</dbReference>
<dbReference type="InterPro" id="IPR014724">
    <property type="entry name" value="RNA_pol_RPB2_OB-fold"/>
</dbReference>
<dbReference type="NCBIfam" id="NF001616">
    <property type="entry name" value="PRK00405.1"/>
    <property type="match status" value="1"/>
</dbReference>
<dbReference type="NCBIfam" id="TIGR02013">
    <property type="entry name" value="rpoB"/>
    <property type="match status" value="1"/>
</dbReference>
<dbReference type="PANTHER" id="PTHR20856">
    <property type="entry name" value="DNA-DIRECTED RNA POLYMERASE I SUBUNIT 2"/>
    <property type="match status" value="1"/>
</dbReference>
<dbReference type="Pfam" id="PF04563">
    <property type="entry name" value="RNA_pol_Rpb2_1"/>
    <property type="match status" value="1"/>
</dbReference>
<dbReference type="Pfam" id="PF04561">
    <property type="entry name" value="RNA_pol_Rpb2_2"/>
    <property type="match status" value="2"/>
</dbReference>
<dbReference type="Pfam" id="PF04565">
    <property type="entry name" value="RNA_pol_Rpb2_3"/>
    <property type="match status" value="1"/>
</dbReference>
<dbReference type="Pfam" id="PF10385">
    <property type="entry name" value="RNA_pol_Rpb2_45"/>
    <property type="match status" value="1"/>
</dbReference>
<dbReference type="Pfam" id="PF00562">
    <property type="entry name" value="RNA_pol_Rpb2_6"/>
    <property type="match status" value="1"/>
</dbReference>
<dbReference type="Pfam" id="PF04560">
    <property type="entry name" value="RNA_pol_Rpb2_7"/>
    <property type="match status" value="1"/>
</dbReference>
<dbReference type="SUPFAM" id="SSF64484">
    <property type="entry name" value="beta and beta-prime subunits of DNA dependent RNA-polymerase"/>
    <property type="match status" value="1"/>
</dbReference>
<dbReference type="PROSITE" id="PS01166">
    <property type="entry name" value="RNA_POL_BETA"/>
    <property type="match status" value="1"/>
</dbReference>
<feature type="chain" id="PRO_1000067548" description="DNA-directed RNA polymerase subunit beta">
    <location>
        <begin position="1"/>
        <end position="1342"/>
    </location>
</feature>
<feature type="modified residue" description="N6-acetyllysine" evidence="1">
    <location>
        <position position="1022"/>
    </location>
</feature>
<feature type="modified residue" description="N6-acetyllysine" evidence="1">
    <location>
        <position position="1200"/>
    </location>
</feature>
<comment type="function">
    <text evidence="1">DNA-dependent RNA polymerase catalyzes the transcription of DNA into RNA using the four ribonucleoside triphosphates as substrates.</text>
</comment>
<comment type="catalytic activity">
    <reaction evidence="1">
        <text>RNA(n) + a ribonucleoside 5'-triphosphate = RNA(n+1) + diphosphate</text>
        <dbReference type="Rhea" id="RHEA:21248"/>
        <dbReference type="Rhea" id="RHEA-COMP:14527"/>
        <dbReference type="Rhea" id="RHEA-COMP:17342"/>
        <dbReference type="ChEBI" id="CHEBI:33019"/>
        <dbReference type="ChEBI" id="CHEBI:61557"/>
        <dbReference type="ChEBI" id="CHEBI:140395"/>
        <dbReference type="EC" id="2.7.7.6"/>
    </reaction>
</comment>
<comment type="subunit">
    <text evidence="1">The RNAP catalytic core consists of 2 alpha, 1 beta, 1 beta' and 1 omega subunit. When a sigma factor is associated with the core the holoenzyme is formed, which can initiate transcription.</text>
</comment>
<comment type="similarity">
    <text evidence="1">Belongs to the RNA polymerase beta chain family.</text>
</comment>
<gene>
    <name evidence="1" type="primary">rpoB</name>
    <name type="ordered locus">EcE24377A_4528</name>
</gene>
<name>RPOB_ECO24</name>